<keyword id="KW-0413">Isomerase</keyword>
<accession>Q2JSC9</accession>
<organism>
    <name type="scientific">Synechococcus sp. (strain JA-3-3Ab)</name>
    <name type="common">Cyanobacteria bacterium Yellowstone A-Prime</name>
    <dbReference type="NCBI Taxonomy" id="321327"/>
    <lineage>
        <taxon>Bacteria</taxon>
        <taxon>Bacillati</taxon>
        <taxon>Cyanobacteriota</taxon>
        <taxon>Cyanophyceae</taxon>
        <taxon>Synechococcales</taxon>
        <taxon>Synechococcaceae</taxon>
        <taxon>Synechococcus</taxon>
    </lineage>
</organism>
<comment type="function">
    <text evidence="1">Catalyzes the reversible conversion of ribose-5-phosphate to ribulose 5-phosphate.</text>
</comment>
<comment type="catalytic activity">
    <reaction evidence="1">
        <text>aldehydo-D-ribose 5-phosphate = D-ribulose 5-phosphate</text>
        <dbReference type="Rhea" id="RHEA:14657"/>
        <dbReference type="ChEBI" id="CHEBI:58121"/>
        <dbReference type="ChEBI" id="CHEBI:58273"/>
        <dbReference type="EC" id="5.3.1.6"/>
    </reaction>
</comment>
<comment type="pathway">
    <text evidence="1">Carbohydrate degradation; pentose phosphate pathway; D-ribose 5-phosphate from D-ribulose 5-phosphate (non-oxidative stage): step 1/1.</text>
</comment>
<comment type="subunit">
    <text evidence="1">Homodimer.</text>
</comment>
<comment type="similarity">
    <text evidence="1">Belongs to the ribose 5-phosphate isomerase family.</text>
</comment>
<sequence>MASADELKQAAAQAAAQKVQSGMVVGLGTGSTAAFAVGALAQRMQKEGLQFIGVPTSERTAEQARSLGIPLATLEEQPRLDLAIDGADEIEVGSLNLIKGAGGALLREKLVEASAAELIIIADASKKVAHLGTRFPVPVEVVRFGWKTTLARVEALGCQAVLRRTAEGDPYLTDEQHYILDCQFGPIANPAKLAEQLKGTVGVVEHGLFIGMATEAIIAGPEGIETLRQS</sequence>
<evidence type="ECO:0000255" key="1">
    <source>
        <dbReference type="HAMAP-Rule" id="MF_00170"/>
    </source>
</evidence>
<gene>
    <name evidence="1" type="primary">rpiA</name>
    <name type="ordered locus">CYA_2325</name>
</gene>
<protein>
    <recommendedName>
        <fullName evidence="1">Ribose-5-phosphate isomerase A</fullName>
        <ecNumber evidence="1">5.3.1.6</ecNumber>
    </recommendedName>
    <alternativeName>
        <fullName evidence="1">Phosphoriboisomerase A</fullName>
        <shortName evidence="1">PRI</shortName>
    </alternativeName>
</protein>
<feature type="chain" id="PRO_1000194729" description="Ribose-5-phosphate isomerase A">
    <location>
        <begin position="1"/>
        <end position="230"/>
    </location>
</feature>
<feature type="active site" description="Proton acceptor" evidence="1">
    <location>
        <position position="108"/>
    </location>
</feature>
<feature type="binding site" evidence="1">
    <location>
        <begin position="29"/>
        <end position="32"/>
    </location>
    <ligand>
        <name>substrate</name>
    </ligand>
</feature>
<feature type="binding site" evidence="1">
    <location>
        <begin position="85"/>
        <end position="88"/>
    </location>
    <ligand>
        <name>substrate</name>
    </ligand>
</feature>
<feature type="binding site" evidence="1">
    <location>
        <begin position="99"/>
        <end position="102"/>
    </location>
    <ligand>
        <name>substrate</name>
    </ligand>
</feature>
<feature type="binding site" evidence="1">
    <location>
        <position position="126"/>
    </location>
    <ligand>
        <name>substrate</name>
    </ligand>
</feature>
<proteinExistence type="inferred from homology"/>
<dbReference type="EC" id="5.3.1.6" evidence="1"/>
<dbReference type="EMBL" id="CP000239">
    <property type="protein sequence ID" value="ABD00452.1"/>
    <property type="molecule type" value="Genomic_DNA"/>
</dbReference>
<dbReference type="RefSeq" id="WP_011431125.1">
    <property type="nucleotide sequence ID" value="NC_007775.1"/>
</dbReference>
<dbReference type="SMR" id="Q2JSC9"/>
<dbReference type="STRING" id="321327.CYA_2325"/>
<dbReference type="KEGG" id="cya:CYA_2325"/>
<dbReference type="eggNOG" id="COG0120">
    <property type="taxonomic scope" value="Bacteria"/>
</dbReference>
<dbReference type="HOGENOM" id="CLU_056590_1_0_3"/>
<dbReference type="OrthoDB" id="5870696at2"/>
<dbReference type="UniPathway" id="UPA00115">
    <property type="reaction ID" value="UER00412"/>
</dbReference>
<dbReference type="Proteomes" id="UP000008818">
    <property type="component" value="Chromosome"/>
</dbReference>
<dbReference type="GO" id="GO:0004751">
    <property type="term" value="F:ribose-5-phosphate isomerase activity"/>
    <property type="evidence" value="ECO:0007669"/>
    <property type="project" value="UniProtKB-UniRule"/>
</dbReference>
<dbReference type="GO" id="GO:0009052">
    <property type="term" value="P:pentose-phosphate shunt, non-oxidative branch"/>
    <property type="evidence" value="ECO:0007669"/>
    <property type="project" value="UniProtKB-UniRule"/>
</dbReference>
<dbReference type="CDD" id="cd01398">
    <property type="entry name" value="RPI_A"/>
    <property type="match status" value="1"/>
</dbReference>
<dbReference type="FunFam" id="3.40.50.1360:FF:000001">
    <property type="entry name" value="Ribose-5-phosphate isomerase A"/>
    <property type="match status" value="1"/>
</dbReference>
<dbReference type="Gene3D" id="3.30.70.260">
    <property type="match status" value="1"/>
</dbReference>
<dbReference type="Gene3D" id="3.40.50.1360">
    <property type="match status" value="1"/>
</dbReference>
<dbReference type="HAMAP" id="MF_00170">
    <property type="entry name" value="Rib_5P_isom_A"/>
    <property type="match status" value="1"/>
</dbReference>
<dbReference type="InterPro" id="IPR037171">
    <property type="entry name" value="NagB/RpiA_transferase-like"/>
</dbReference>
<dbReference type="InterPro" id="IPR050262">
    <property type="entry name" value="Ribose-5P_isomerase"/>
</dbReference>
<dbReference type="InterPro" id="IPR020672">
    <property type="entry name" value="Ribose5P_isomerase_typA_subgr"/>
</dbReference>
<dbReference type="InterPro" id="IPR004788">
    <property type="entry name" value="Ribose5P_isomerase_type_A"/>
</dbReference>
<dbReference type="NCBIfam" id="NF001924">
    <property type="entry name" value="PRK00702.1"/>
    <property type="match status" value="1"/>
</dbReference>
<dbReference type="NCBIfam" id="TIGR00021">
    <property type="entry name" value="rpiA"/>
    <property type="match status" value="1"/>
</dbReference>
<dbReference type="PANTHER" id="PTHR43748">
    <property type="entry name" value="RIBOSE-5-PHOSPHATE ISOMERASE 3, CHLOROPLASTIC-RELATED"/>
    <property type="match status" value="1"/>
</dbReference>
<dbReference type="PANTHER" id="PTHR43748:SF3">
    <property type="entry name" value="RIBOSE-5-PHOSPHATE ISOMERASE 3, CHLOROPLASTIC-RELATED"/>
    <property type="match status" value="1"/>
</dbReference>
<dbReference type="Pfam" id="PF06026">
    <property type="entry name" value="Rib_5-P_isom_A"/>
    <property type="match status" value="1"/>
</dbReference>
<dbReference type="SUPFAM" id="SSF75445">
    <property type="entry name" value="D-ribose-5-phosphate isomerase (RpiA), lid domain"/>
    <property type="match status" value="1"/>
</dbReference>
<dbReference type="SUPFAM" id="SSF100950">
    <property type="entry name" value="NagB/RpiA/CoA transferase-like"/>
    <property type="match status" value="1"/>
</dbReference>
<name>RPIA_SYNJA</name>
<reference key="1">
    <citation type="journal article" date="2007" name="ISME J.">
        <title>Population level functional diversity in a microbial community revealed by comparative genomic and metagenomic analyses.</title>
        <authorList>
            <person name="Bhaya D."/>
            <person name="Grossman A.R."/>
            <person name="Steunou A.-S."/>
            <person name="Khuri N."/>
            <person name="Cohan F.M."/>
            <person name="Hamamura N."/>
            <person name="Melendrez M.C."/>
            <person name="Bateson M.M."/>
            <person name="Ward D.M."/>
            <person name="Heidelberg J.F."/>
        </authorList>
    </citation>
    <scope>NUCLEOTIDE SEQUENCE [LARGE SCALE GENOMIC DNA]</scope>
    <source>
        <strain>JA-3-3Ab</strain>
    </source>
</reference>